<organism>
    <name type="scientific">Bacillus subtilis (strain 168)</name>
    <dbReference type="NCBI Taxonomy" id="224308"/>
    <lineage>
        <taxon>Bacteria</taxon>
        <taxon>Bacillati</taxon>
        <taxon>Bacillota</taxon>
        <taxon>Bacilli</taxon>
        <taxon>Bacillales</taxon>
        <taxon>Bacillaceae</taxon>
        <taxon>Bacillus</taxon>
    </lineage>
</organism>
<name>YOCN_BACSU</name>
<proteinExistence type="predicted"/>
<keyword id="KW-1185">Reference proteome</keyword>
<reference key="1">
    <citation type="submission" date="1997-11" db="EMBL/GenBank/DDBJ databases">
        <title>Sequence analysis of the Bacillus subtilis chromosome region between the terC and odhAB loci cloned in a yeast artificial chromosome.</title>
        <authorList>
            <person name="Lapidus A."/>
            <person name="Galleron N."/>
            <person name="Sorokin A."/>
            <person name="Ehrlich S.D."/>
        </authorList>
    </citation>
    <scope>NUCLEOTIDE SEQUENCE [GENOMIC DNA]</scope>
</reference>
<reference key="2">
    <citation type="journal article" date="1997" name="Nature">
        <title>The complete genome sequence of the Gram-positive bacterium Bacillus subtilis.</title>
        <authorList>
            <person name="Kunst F."/>
            <person name="Ogasawara N."/>
            <person name="Moszer I."/>
            <person name="Albertini A.M."/>
            <person name="Alloni G."/>
            <person name="Azevedo V."/>
            <person name="Bertero M.G."/>
            <person name="Bessieres P."/>
            <person name="Bolotin A."/>
            <person name="Borchert S."/>
            <person name="Borriss R."/>
            <person name="Boursier L."/>
            <person name="Brans A."/>
            <person name="Braun M."/>
            <person name="Brignell S.C."/>
            <person name="Bron S."/>
            <person name="Brouillet S."/>
            <person name="Bruschi C.V."/>
            <person name="Caldwell B."/>
            <person name="Capuano V."/>
            <person name="Carter N.M."/>
            <person name="Choi S.-K."/>
            <person name="Codani J.-J."/>
            <person name="Connerton I.F."/>
            <person name="Cummings N.J."/>
            <person name="Daniel R.A."/>
            <person name="Denizot F."/>
            <person name="Devine K.M."/>
            <person name="Duesterhoeft A."/>
            <person name="Ehrlich S.D."/>
            <person name="Emmerson P.T."/>
            <person name="Entian K.-D."/>
            <person name="Errington J."/>
            <person name="Fabret C."/>
            <person name="Ferrari E."/>
            <person name="Foulger D."/>
            <person name="Fritz C."/>
            <person name="Fujita M."/>
            <person name="Fujita Y."/>
            <person name="Fuma S."/>
            <person name="Galizzi A."/>
            <person name="Galleron N."/>
            <person name="Ghim S.-Y."/>
            <person name="Glaser P."/>
            <person name="Goffeau A."/>
            <person name="Golightly E.J."/>
            <person name="Grandi G."/>
            <person name="Guiseppi G."/>
            <person name="Guy B.J."/>
            <person name="Haga K."/>
            <person name="Haiech J."/>
            <person name="Harwood C.R."/>
            <person name="Henaut A."/>
            <person name="Hilbert H."/>
            <person name="Holsappel S."/>
            <person name="Hosono S."/>
            <person name="Hullo M.-F."/>
            <person name="Itaya M."/>
            <person name="Jones L.-M."/>
            <person name="Joris B."/>
            <person name="Karamata D."/>
            <person name="Kasahara Y."/>
            <person name="Klaerr-Blanchard M."/>
            <person name="Klein C."/>
            <person name="Kobayashi Y."/>
            <person name="Koetter P."/>
            <person name="Koningstein G."/>
            <person name="Krogh S."/>
            <person name="Kumano M."/>
            <person name="Kurita K."/>
            <person name="Lapidus A."/>
            <person name="Lardinois S."/>
            <person name="Lauber J."/>
            <person name="Lazarevic V."/>
            <person name="Lee S.-M."/>
            <person name="Levine A."/>
            <person name="Liu H."/>
            <person name="Masuda S."/>
            <person name="Mauel C."/>
            <person name="Medigue C."/>
            <person name="Medina N."/>
            <person name="Mellado R.P."/>
            <person name="Mizuno M."/>
            <person name="Moestl D."/>
            <person name="Nakai S."/>
            <person name="Noback M."/>
            <person name="Noone D."/>
            <person name="O'Reilly M."/>
            <person name="Ogawa K."/>
            <person name="Ogiwara A."/>
            <person name="Oudega B."/>
            <person name="Park S.-H."/>
            <person name="Parro V."/>
            <person name="Pohl T.M."/>
            <person name="Portetelle D."/>
            <person name="Porwollik S."/>
            <person name="Prescott A.M."/>
            <person name="Presecan E."/>
            <person name="Pujic P."/>
            <person name="Purnelle B."/>
            <person name="Rapoport G."/>
            <person name="Rey M."/>
            <person name="Reynolds S."/>
            <person name="Rieger M."/>
            <person name="Rivolta C."/>
            <person name="Rocha E."/>
            <person name="Roche B."/>
            <person name="Rose M."/>
            <person name="Sadaie Y."/>
            <person name="Sato T."/>
            <person name="Scanlan E."/>
            <person name="Schleich S."/>
            <person name="Schroeter R."/>
            <person name="Scoffone F."/>
            <person name="Sekiguchi J."/>
            <person name="Sekowska A."/>
            <person name="Seror S.J."/>
            <person name="Serror P."/>
            <person name="Shin B.-S."/>
            <person name="Soldo B."/>
            <person name="Sorokin A."/>
            <person name="Tacconi E."/>
            <person name="Takagi T."/>
            <person name="Takahashi H."/>
            <person name="Takemaru K."/>
            <person name="Takeuchi M."/>
            <person name="Tamakoshi A."/>
            <person name="Tanaka T."/>
            <person name="Terpstra P."/>
            <person name="Tognoni A."/>
            <person name="Tosato V."/>
            <person name="Uchiyama S."/>
            <person name="Vandenbol M."/>
            <person name="Vannier F."/>
            <person name="Vassarotti A."/>
            <person name="Viari A."/>
            <person name="Wambutt R."/>
            <person name="Wedler E."/>
            <person name="Wedler H."/>
            <person name="Weitzenegger T."/>
            <person name="Winters P."/>
            <person name="Wipat A."/>
            <person name="Yamamoto H."/>
            <person name="Yamane K."/>
            <person name="Yasumoto K."/>
            <person name="Yata K."/>
            <person name="Yoshida K."/>
            <person name="Yoshikawa H.-F."/>
            <person name="Zumstein E."/>
            <person name="Yoshikawa H."/>
            <person name="Danchin A."/>
        </authorList>
    </citation>
    <scope>NUCLEOTIDE SEQUENCE [LARGE SCALE GENOMIC DNA]</scope>
    <source>
        <strain>168</strain>
    </source>
</reference>
<gene>
    <name type="primary">yocN</name>
    <name type="ordered locus">BSU19280</name>
</gene>
<feature type="chain" id="PRO_0000049656" description="Uncharacterized protein YocN">
    <location>
        <begin position="1"/>
        <end position="77"/>
    </location>
</feature>
<dbReference type="EMBL" id="AF027868">
    <property type="protein sequence ID" value="AAB84439.1"/>
    <property type="molecule type" value="Genomic_DNA"/>
</dbReference>
<dbReference type="EMBL" id="AL009126">
    <property type="protein sequence ID" value="CAB13820.1"/>
    <property type="molecule type" value="Genomic_DNA"/>
</dbReference>
<dbReference type="PIR" id="C69902">
    <property type="entry name" value="C69902"/>
</dbReference>
<dbReference type="RefSeq" id="NP_389810.1">
    <property type="nucleotide sequence ID" value="NC_000964.3"/>
</dbReference>
<dbReference type="RefSeq" id="WP_003231251.1">
    <property type="nucleotide sequence ID" value="NZ_OZ025638.1"/>
</dbReference>
<dbReference type="FunCoup" id="O34855">
    <property type="interactions" value="53"/>
</dbReference>
<dbReference type="STRING" id="224308.BSU19280"/>
<dbReference type="PaxDb" id="224308-BSU19280"/>
<dbReference type="EnsemblBacteria" id="CAB13820">
    <property type="protein sequence ID" value="CAB13820"/>
    <property type="gene ID" value="BSU_19280"/>
</dbReference>
<dbReference type="GeneID" id="939594"/>
<dbReference type="KEGG" id="bsu:BSU19280"/>
<dbReference type="PATRIC" id="fig|224308.179.peg.2109"/>
<dbReference type="eggNOG" id="ENOG50339HA">
    <property type="taxonomic scope" value="Bacteria"/>
</dbReference>
<dbReference type="InParanoid" id="O34855"/>
<dbReference type="OrthoDB" id="2680365at2"/>
<dbReference type="BioCyc" id="BSUB:BSU19280-MONOMER"/>
<dbReference type="Proteomes" id="UP000001570">
    <property type="component" value="Chromosome"/>
</dbReference>
<protein>
    <recommendedName>
        <fullName>Uncharacterized protein YocN</fullName>
    </recommendedName>
</protein>
<sequence>MFFSPSVVNVGGFKINTMDRGSSLTLGPYQQVDYFLSAKINQGFGEENGDFTPLVVPISNVLDADLVDSNSAKNSVV</sequence>
<accession>O34855</accession>